<proteinExistence type="inferred from homology"/>
<organism>
    <name type="scientific">Staphylococcus aureus (strain Newman)</name>
    <dbReference type="NCBI Taxonomy" id="426430"/>
    <lineage>
        <taxon>Bacteria</taxon>
        <taxon>Bacillati</taxon>
        <taxon>Bacillota</taxon>
        <taxon>Bacilli</taxon>
        <taxon>Bacillales</taxon>
        <taxon>Staphylococcaceae</taxon>
        <taxon>Staphylococcus</taxon>
    </lineage>
</organism>
<feature type="chain" id="PRO_1000072221" description="Large ribosomal subunit protein bL34">
    <location>
        <begin position="1"/>
        <end position="45"/>
    </location>
</feature>
<feature type="region of interest" description="Disordered" evidence="2">
    <location>
        <begin position="1"/>
        <end position="45"/>
    </location>
</feature>
<reference key="1">
    <citation type="journal article" date="2008" name="J. Bacteriol.">
        <title>Genome sequence of Staphylococcus aureus strain Newman and comparative analysis of staphylococcal genomes: polymorphism and evolution of two major pathogenicity islands.</title>
        <authorList>
            <person name="Baba T."/>
            <person name="Bae T."/>
            <person name="Schneewind O."/>
            <person name="Takeuchi F."/>
            <person name="Hiramatsu K."/>
        </authorList>
    </citation>
    <scope>NUCLEOTIDE SEQUENCE [LARGE SCALE GENOMIC DNA]</scope>
    <source>
        <strain>Newman</strain>
    </source>
</reference>
<protein>
    <recommendedName>
        <fullName evidence="1">Large ribosomal subunit protein bL34</fullName>
    </recommendedName>
    <alternativeName>
        <fullName evidence="3">50S ribosomal protein L34</fullName>
    </alternativeName>
</protein>
<comment type="similarity">
    <text evidence="1">Belongs to the bacterial ribosomal protein bL34 family.</text>
</comment>
<sequence>MVKRTYQPNKRKHSKVHGFRKRMSTKNGRKVLARRRRKGRKVLSA</sequence>
<dbReference type="EMBL" id="AP009351">
    <property type="protein sequence ID" value="BAF68886.1"/>
    <property type="molecule type" value="Genomic_DNA"/>
</dbReference>
<dbReference type="RefSeq" id="WP_000240855.1">
    <property type="nucleotide sequence ID" value="NZ_JBBIAE010000007.1"/>
</dbReference>
<dbReference type="SMR" id="A6QKK4"/>
<dbReference type="GeneID" id="98347025"/>
<dbReference type="KEGG" id="sae:NWMN_2614"/>
<dbReference type="HOGENOM" id="CLU_129938_2_0_9"/>
<dbReference type="Proteomes" id="UP000006386">
    <property type="component" value="Chromosome"/>
</dbReference>
<dbReference type="GO" id="GO:1990904">
    <property type="term" value="C:ribonucleoprotein complex"/>
    <property type="evidence" value="ECO:0007669"/>
    <property type="project" value="UniProtKB-KW"/>
</dbReference>
<dbReference type="GO" id="GO:0005840">
    <property type="term" value="C:ribosome"/>
    <property type="evidence" value="ECO:0007669"/>
    <property type="project" value="UniProtKB-KW"/>
</dbReference>
<dbReference type="GO" id="GO:0003735">
    <property type="term" value="F:structural constituent of ribosome"/>
    <property type="evidence" value="ECO:0007669"/>
    <property type="project" value="InterPro"/>
</dbReference>
<dbReference type="GO" id="GO:0006412">
    <property type="term" value="P:translation"/>
    <property type="evidence" value="ECO:0007669"/>
    <property type="project" value="UniProtKB-UniRule"/>
</dbReference>
<dbReference type="FunFam" id="1.10.287.3980:FF:000001">
    <property type="entry name" value="Mitochondrial ribosomal protein L34"/>
    <property type="match status" value="1"/>
</dbReference>
<dbReference type="Gene3D" id="1.10.287.3980">
    <property type="match status" value="1"/>
</dbReference>
<dbReference type="HAMAP" id="MF_00391">
    <property type="entry name" value="Ribosomal_bL34"/>
    <property type="match status" value="1"/>
</dbReference>
<dbReference type="InterPro" id="IPR000271">
    <property type="entry name" value="Ribosomal_bL34"/>
</dbReference>
<dbReference type="InterPro" id="IPR020939">
    <property type="entry name" value="Ribosomal_bL34_CS"/>
</dbReference>
<dbReference type="NCBIfam" id="TIGR01030">
    <property type="entry name" value="rpmH_bact"/>
    <property type="match status" value="1"/>
</dbReference>
<dbReference type="PANTHER" id="PTHR14503:SF4">
    <property type="entry name" value="LARGE RIBOSOMAL SUBUNIT PROTEIN BL34M"/>
    <property type="match status" value="1"/>
</dbReference>
<dbReference type="PANTHER" id="PTHR14503">
    <property type="entry name" value="MITOCHONDRIAL RIBOSOMAL PROTEIN 34 FAMILY MEMBER"/>
    <property type="match status" value="1"/>
</dbReference>
<dbReference type="Pfam" id="PF00468">
    <property type="entry name" value="Ribosomal_L34"/>
    <property type="match status" value="1"/>
</dbReference>
<dbReference type="PROSITE" id="PS00784">
    <property type="entry name" value="RIBOSOMAL_L34"/>
    <property type="match status" value="1"/>
</dbReference>
<accession>A6QKK4</accession>
<keyword id="KW-0687">Ribonucleoprotein</keyword>
<keyword id="KW-0689">Ribosomal protein</keyword>
<gene>
    <name evidence="1" type="primary">rpmH</name>
    <name type="ordered locus">NWMN_2614</name>
</gene>
<evidence type="ECO:0000255" key="1">
    <source>
        <dbReference type="HAMAP-Rule" id="MF_00391"/>
    </source>
</evidence>
<evidence type="ECO:0000256" key="2">
    <source>
        <dbReference type="SAM" id="MobiDB-lite"/>
    </source>
</evidence>
<evidence type="ECO:0000305" key="3"/>
<name>RL34_STAAE</name>